<comment type="function">
    <text evidence="2">Attaches the virus to host receptors, inducing clathrin-dependent endocytosis of the virion. In the endosome, the acidic pH induces conformational changes in the glycoprotein trimer, which trigger fusion between virus and endosomal membrane.</text>
</comment>
<comment type="subunit">
    <text evidence="2">Homotrimer. Interacts with host LDL at target cell surface.</text>
</comment>
<comment type="subcellular location">
    <subcellularLocation>
        <location evidence="2">Virion membrane</location>
        <topology evidence="2">Single-pass type I membrane protein</topology>
    </subcellularLocation>
    <subcellularLocation>
        <location evidence="2">Host membrane</location>
        <topology evidence="2">Single-pass type I membrane protein</topology>
    </subcellularLocation>
</comment>
<comment type="PTM">
    <text evidence="2">Glycosylated by host. Palmitoylated by host.</text>
</comment>
<comment type="similarity">
    <text evidence="5">Belongs to the vesiculovirus glycoprotein family.</text>
</comment>
<gene>
    <name type="primary">G</name>
</gene>
<feature type="signal peptide" evidence="4">
    <location>
        <begin position="1"/>
        <end position="20"/>
    </location>
</feature>
<feature type="chain" id="PRO_0000287247" description="Glycoprotein">
    <location>
        <begin position="21"/>
        <end position="523"/>
    </location>
</feature>
<feature type="topological domain" description="Virion surface" evidence="4">
    <location>
        <begin position="21"/>
        <end position="475"/>
    </location>
</feature>
<feature type="transmembrane region" description="Helical" evidence="4">
    <location>
        <begin position="476"/>
        <end position="496"/>
    </location>
</feature>
<feature type="topological domain" description="Intravirion" evidence="4">
    <location>
        <begin position="497"/>
        <end position="523"/>
    </location>
</feature>
<feature type="region of interest" description="Fusion peptide" evidence="3">
    <location>
        <begin position="57"/>
        <end position="176"/>
    </location>
</feature>
<feature type="region of interest" description="Trimerization" evidence="3">
    <location>
        <begin position="262"/>
        <end position="316"/>
    </location>
</feature>
<feature type="region of interest" description="Trimerization" evidence="3">
    <location>
        <begin position="391"/>
        <end position="413"/>
    </location>
</feature>
<feature type="site" description="pH sensor in the pre-fusion state" evidence="3">
    <location>
        <position position="80"/>
    </location>
</feature>
<feature type="site" description="pH sensor in the pre-fusion state" evidence="3">
    <location>
        <position position="182"/>
    </location>
</feature>
<feature type="site" description="pH sensor in the pre-fusion state" evidence="3">
    <location>
        <position position="431"/>
    </location>
</feature>
<feature type="lipid moiety-binding region" description="S-palmitoyl cysteine; by host" evidence="1">
    <location>
        <position position="497"/>
    </location>
</feature>
<feature type="glycosylation site" description="N-linked (GlcNAc...) asparagine; by host" evidence="4">
    <location>
        <position position="183"/>
    </location>
</feature>
<feature type="glycosylation site" description="N-linked (GlcNAc...) asparagine; by host" evidence="4">
    <location>
        <position position="343"/>
    </location>
</feature>
<feature type="disulfide bond" evidence="1">
    <location>
        <begin position="44"/>
        <end position="307"/>
    </location>
</feature>
<feature type="disulfide bond" evidence="1">
    <location>
        <begin position="79"/>
        <end position="112"/>
    </location>
</feature>
<feature type="disulfide bond" evidence="1">
    <location>
        <begin position="88"/>
        <end position="134"/>
    </location>
</feature>
<feature type="disulfide bond" evidence="1">
    <location>
        <begin position="173"/>
        <end position="178"/>
    </location>
</feature>
<feature type="disulfide bond" evidence="1">
    <location>
        <begin position="198"/>
        <end position="243"/>
    </location>
</feature>
<feature type="disulfide bond" evidence="1">
    <location>
        <begin position="238"/>
        <end position="276"/>
    </location>
</feature>
<sequence>MTSVLFMVGVLLGAFGSTHCSIQIVFPSETKLVWKPVLKGTRYCPQSAELNLEPDLKTMAFDSKVPIGITPSNSDGYLCHAAKWVTTCDFRWYGPKYITHSVHSLRPTVSDCKAAVEAYNAGTLMYPGFPPESCGYASITDSEFYVMLVTPHPVGVDDYRGHWVDPLFPTSECNSNFCETVHNATMWIPKDLKTHDVCSQDFQTIRVSVMYPQTKPTKGADLTLKSKFHAHMKGDRVCKMKFCNKNGLRLGNGEWIEVGDEVMLDNSKLLSLFPDCLVGSVVKSTLLSEGVQTALWETDRLLDYSLCQNTWEKIDRKEPLSAVDLSYLAPRSPGKGMAYIVANGSLMSAPARYIRVWIDSPILKEIKGKKESASGIDTVLWEQWLPFNGMELGPNGLIKTKSGYKFPLYLLGMGIVDQDLQELSSVNPVDHPHVPIAQAFVSEGEEVFFGDTGVSKNPIELISGWFSDWKETAAALGFAAISVILIIGLMRLLPLLCRRRKQKKVIYKDVELNSFDPRQAFHR</sequence>
<accession>Q5K2K4</accession>
<proteinExistence type="inferred from homology"/>
<protein>
    <recommendedName>
        <fullName>Glycoprotein</fullName>
    </recommendedName>
</protein>
<dbReference type="EMBL" id="AJ810084">
    <property type="protein sequence ID" value="CAH17547.1"/>
    <property type="molecule type" value="Genomic_RNA"/>
</dbReference>
<dbReference type="RefSeq" id="YP_007641385.1">
    <property type="nucleotide sequence ID" value="NC_020806.1"/>
</dbReference>
<dbReference type="SMR" id="Q5K2K4"/>
<dbReference type="GlyCosmos" id="Q5K2K4">
    <property type="glycosylation" value="2 sites, No reported glycans"/>
</dbReference>
<dbReference type="GeneID" id="14857915"/>
<dbReference type="KEGG" id="vg:14857915"/>
<dbReference type="OrthoDB" id="21147at10239"/>
<dbReference type="Proteomes" id="UP000204017">
    <property type="component" value="Genome"/>
</dbReference>
<dbReference type="GO" id="GO:0033644">
    <property type="term" value="C:host cell membrane"/>
    <property type="evidence" value="ECO:0007669"/>
    <property type="project" value="UniProtKB-SubCell"/>
</dbReference>
<dbReference type="GO" id="GO:0016020">
    <property type="term" value="C:membrane"/>
    <property type="evidence" value="ECO:0007669"/>
    <property type="project" value="UniProtKB-KW"/>
</dbReference>
<dbReference type="GO" id="GO:0019031">
    <property type="term" value="C:viral envelope"/>
    <property type="evidence" value="ECO:0007669"/>
    <property type="project" value="UniProtKB-KW"/>
</dbReference>
<dbReference type="GO" id="GO:0055036">
    <property type="term" value="C:virion membrane"/>
    <property type="evidence" value="ECO:0007669"/>
    <property type="project" value="UniProtKB-SubCell"/>
</dbReference>
<dbReference type="GO" id="GO:0046718">
    <property type="term" value="P:symbiont entry into host cell"/>
    <property type="evidence" value="ECO:0007669"/>
    <property type="project" value="UniProtKB-KW"/>
</dbReference>
<dbReference type="GO" id="GO:0019062">
    <property type="term" value="P:virion attachment to host cell"/>
    <property type="evidence" value="ECO:0007669"/>
    <property type="project" value="UniProtKB-KW"/>
</dbReference>
<dbReference type="Gene3D" id="2.30.29.130">
    <property type="match status" value="1"/>
</dbReference>
<dbReference type="Gene3D" id="2.30.30.640">
    <property type="match status" value="1"/>
</dbReference>
<dbReference type="InterPro" id="IPR055448">
    <property type="entry name" value="PH_Rhabdo_glycop"/>
</dbReference>
<dbReference type="InterPro" id="IPR055447">
    <property type="entry name" value="Rhabdo_glycop_CD"/>
</dbReference>
<dbReference type="InterPro" id="IPR001903">
    <property type="entry name" value="Rhabdo_glycop_FD"/>
</dbReference>
<dbReference type="Pfam" id="PF24834">
    <property type="entry name" value="PH_Rhabdo_glycop"/>
    <property type="match status" value="1"/>
</dbReference>
<dbReference type="Pfam" id="PF24833">
    <property type="entry name" value="Rhabdo_glycop_CD"/>
    <property type="match status" value="1"/>
</dbReference>
<dbReference type="Pfam" id="PF00974">
    <property type="entry name" value="Rhabdo_glycop_FD"/>
    <property type="match status" value="1"/>
</dbReference>
<dbReference type="SUPFAM" id="SSF161008">
    <property type="entry name" value="Viral glycoprotein ectodomain-like"/>
    <property type="match status" value="1"/>
</dbReference>
<organismHost>
    <name type="scientific">Gerbillinae</name>
    <name type="common">gerbils</name>
    <dbReference type="NCBI Taxonomy" id="10045"/>
</organismHost>
<organismHost>
    <name type="scientific">Homo sapiens</name>
    <name type="common">Human</name>
    <dbReference type="NCBI Taxonomy" id="9606"/>
</organismHost>
<organismHost>
    <name type="scientific">Phlebotomus papatasi</name>
    <name type="common">Sandfly</name>
    <dbReference type="NCBI Taxonomy" id="29031"/>
</organismHost>
<keyword id="KW-1015">Disulfide bond</keyword>
<keyword id="KW-0325">Glycoprotein</keyword>
<keyword id="KW-1043">Host membrane</keyword>
<keyword id="KW-0945">Host-virus interaction</keyword>
<keyword id="KW-0449">Lipoprotein</keyword>
<keyword id="KW-0472">Membrane</keyword>
<keyword id="KW-0564">Palmitate</keyword>
<keyword id="KW-0732">Signal</keyword>
<keyword id="KW-0812">Transmembrane</keyword>
<keyword id="KW-1133">Transmembrane helix</keyword>
<keyword id="KW-1161">Viral attachment to host cell</keyword>
<keyword id="KW-0261">Viral envelope protein</keyword>
<keyword id="KW-0946">Virion</keyword>
<keyword id="KW-1160">Virus entry into host cell</keyword>
<evidence type="ECO:0000250" key="1"/>
<evidence type="ECO:0000250" key="2">
    <source>
        <dbReference type="UniProtKB" id="P03522"/>
    </source>
</evidence>
<evidence type="ECO:0000250" key="3">
    <source>
        <dbReference type="UniProtKB" id="P0C2X0"/>
    </source>
</evidence>
<evidence type="ECO:0000255" key="4"/>
<evidence type="ECO:0000305" key="5"/>
<name>GLYCO_ISFV</name>
<organism>
    <name type="scientific">Isfahan virus</name>
    <name type="common">ISFV</name>
    <dbReference type="NCBI Taxonomy" id="290008"/>
    <lineage>
        <taxon>Viruses</taxon>
        <taxon>Riboviria</taxon>
        <taxon>Orthornavirae</taxon>
        <taxon>Negarnaviricota</taxon>
        <taxon>Haploviricotina</taxon>
        <taxon>Monjiviricetes</taxon>
        <taxon>Mononegavirales</taxon>
        <taxon>Rhabdoviridae</taxon>
        <taxon>Alpharhabdovirinae</taxon>
        <taxon>Vesiculovirus</taxon>
        <taxon>Vesiculovirus isfahan</taxon>
    </lineage>
</organism>
<reference key="1">
    <citation type="journal article" date="2005" name="Arch. Virol.">
        <title>Complete genome sequences of Chandipura and Isfahan vesiculoviruses.</title>
        <authorList>
            <person name="Marriott A.C."/>
        </authorList>
    </citation>
    <scope>NUCLEOTIDE SEQUENCE [GENOMIC RNA]</scope>
</reference>